<proteinExistence type="inferred from homology"/>
<accession>A5IL80</accession>
<organism>
    <name type="scientific">Thermotoga petrophila (strain ATCC BAA-488 / DSM 13995 / JCM 10881 / RKU-1)</name>
    <dbReference type="NCBI Taxonomy" id="390874"/>
    <lineage>
        <taxon>Bacteria</taxon>
        <taxon>Thermotogati</taxon>
        <taxon>Thermotogota</taxon>
        <taxon>Thermotogae</taxon>
        <taxon>Thermotogales</taxon>
        <taxon>Thermotogaceae</taxon>
        <taxon>Thermotoga</taxon>
    </lineage>
</organism>
<gene>
    <name evidence="1" type="primary">rimO</name>
    <name type="ordered locus">Tpet_0935</name>
</gene>
<evidence type="ECO:0000255" key="1">
    <source>
        <dbReference type="HAMAP-Rule" id="MF_01865"/>
    </source>
</evidence>
<evidence type="ECO:0000255" key="2">
    <source>
        <dbReference type="PROSITE-ProRule" id="PRU01266"/>
    </source>
</evidence>
<comment type="function">
    <text evidence="1">Catalyzes the methylthiolation of an aspartic acid residue of ribosomal protein uS12.</text>
</comment>
<comment type="catalytic activity">
    <reaction evidence="1">
        <text>L-aspartate(89)-[ribosomal protein uS12]-hydrogen + (sulfur carrier)-SH + AH2 + 2 S-adenosyl-L-methionine = 3-methylsulfanyl-L-aspartate(89)-[ribosomal protein uS12]-hydrogen + (sulfur carrier)-H + 5'-deoxyadenosine + L-methionine + A + S-adenosyl-L-homocysteine + 2 H(+)</text>
        <dbReference type="Rhea" id="RHEA:37087"/>
        <dbReference type="Rhea" id="RHEA-COMP:10460"/>
        <dbReference type="Rhea" id="RHEA-COMP:10461"/>
        <dbReference type="Rhea" id="RHEA-COMP:14737"/>
        <dbReference type="Rhea" id="RHEA-COMP:14739"/>
        <dbReference type="ChEBI" id="CHEBI:13193"/>
        <dbReference type="ChEBI" id="CHEBI:15378"/>
        <dbReference type="ChEBI" id="CHEBI:17319"/>
        <dbReference type="ChEBI" id="CHEBI:17499"/>
        <dbReference type="ChEBI" id="CHEBI:29917"/>
        <dbReference type="ChEBI" id="CHEBI:29961"/>
        <dbReference type="ChEBI" id="CHEBI:57844"/>
        <dbReference type="ChEBI" id="CHEBI:57856"/>
        <dbReference type="ChEBI" id="CHEBI:59789"/>
        <dbReference type="ChEBI" id="CHEBI:64428"/>
        <dbReference type="ChEBI" id="CHEBI:73599"/>
        <dbReference type="EC" id="2.8.4.4"/>
    </reaction>
</comment>
<comment type="cofactor">
    <cofactor evidence="1">
        <name>[4Fe-4S] cluster</name>
        <dbReference type="ChEBI" id="CHEBI:49883"/>
    </cofactor>
    <text evidence="1">Binds 2 [4Fe-4S] clusters. One cluster is coordinated with 3 cysteines and an exchangeable S-adenosyl-L-methionine.</text>
</comment>
<comment type="subcellular location">
    <subcellularLocation>
        <location evidence="1">Cytoplasm</location>
    </subcellularLocation>
</comment>
<comment type="similarity">
    <text evidence="1">Belongs to the methylthiotransferase family. RimO subfamily.</text>
</comment>
<name>RIMO_THEP1</name>
<keyword id="KW-0004">4Fe-4S</keyword>
<keyword id="KW-0963">Cytoplasm</keyword>
<keyword id="KW-0408">Iron</keyword>
<keyword id="KW-0411">Iron-sulfur</keyword>
<keyword id="KW-0479">Metal-binding</keyword>
<keyword id="KW-0949">S-adenosyl-L-methionine</keyword>
<keyword id="KW-0808">Transferase</keyword>
<protein>
    <recommendedName>
        <fullName evidence="1">Ribosomal protein uS12 methylthiotransferase RimO</fullName>
        <shortName evidence="1">uS12 MTTase</shortName>
        <shortName evidence="1">uS12 methylthiotransferase</shortName>
        <ecNumber evidence="1">2.8.4.4</ecNumber>
    </recommendedName>
    <alternativeName>
        <fullName evidence="1">Ribosomal protein uS12 (aspartate-C(3))-methylthiotransferase</fullName>
    </alternativeName>
    <alternativeName>
        <fullName evidence="1">Ribosome maturation factor RimO</fullName>
    </alternativeName>
</protein>
<sequence>MRVGIKVLGCPKNEADCEVLAGVLREGGHEIVFDVKDADVVVLDTCAFIEDAKRESIDEIFSFVDAKDQYGYKLVVKGCLVQRYYEELKKEVPEVDQWIGVADPEEIANAIENGTDLVPDQPETVYRYRKRIDLEERPYAYVKISDGCDRGCTFCSIPSFKGSLRSRSIEDITREVEDLLKEGKKEIILVAQDTTSYGIDLYRKQALPDLLRRLNSLNGEFWIRVMYLHPDHLTEEIISAMLELDKVVKYFDVPVQHGSDKILKLMGRTKSSEELKKMLSSIRERFPDAVLRTSIIVGFPGETEEDFEELKQFVEEIQFDKLGAFVYSDEEGTVAFNLKEKVDPEMAKRRQEELLLLQAEISNSRLDRFVGKKLKFLVEGKEGKFLVGRTWTEAPEVDGVVFVRGKGKIGDFLEVVIKEHDEYDMWGSVI</sequence>
<feature type="chain" id="PRO_0000375053" description="Ribosomal protein uS12 methylthiotransferase RimO">
    <location>
        <begin position="1"/>
        <end position="430"/>
    </location>
</feature>
<feature type="domain" description="MTTase N-terminal" evidence="1">
    <location>
        <begin position="1"/>
        <end position="116"/>
    </location>
</feature>
<feature type="domain" description="Radical SAM core" evidence="2">
    <location>
        <begin position="134"/>
        <end position="365"/>
    </location>
</feature>
<feature type="domain" description="TRAM" evidence="1">
    <location>
        <begin position="367"/>
        <end position="430"/>
    </location>
</feature>
<feature type="binding site" evidence="1">
    <location>
        <position position="10"/>
    </location>
    <ligand>
        <name>[4Fe-4S] cluster</name>
        <dbReference type="ChEBI" id="CHEBI:49883"/>
        <label>1</label>
    </ligand>
</feature>
<feature type="binding site" evidence="1">
    <location>
        <position position="46"/>
    </location>
    <ligand>
        <name>[4Fe-4S] cluster</name>
        <dbReference type="ChEBI" id="CHEBI:49883"/>
        <label>1</label>
    </ligand>
</feature>
<feature type="binding site" evidence="1">
    <location>
        <position position="79"/>
    </location>
    <ligand>
        <name>[4Fe-4S] cluster</name>
        <dbReference type="ChEBI" id="CHEBI:49883"/>
        <label>1</label>
    </ligand>
</feature>
<feature type="binding site" evidence="1">
    <location>
        <position position="148"/>
    </location>
    <ligand>
        <name>[4Fe-4S] cluster</name>
        <dbReference type="ChEBI" id="CHEBI:49883"/>
        <label>2</label>
        <note>4Fe-4S-S-AdoMet</note>
    </ligand>
</feature>
<feature type="binding site" evidence="1">
    <location>
        <position position="152"/>
    </location>
    <ligand>
        <name>[4Fe-4S] cluster</name>
        <dbReference type="ChEBI" id="CHEBI:49883"/>
        <label>2</label>
        <note>4Fe-4S-S-AdoMet</note>
    </ligand>
</feature>
<feature type="binding site" evidence="1">
    <location>
        <position position="155"/>
    </location>
    <ligand>
        <name>[4Fe-4S] cluster</name>
        <dbReference type="ChEBI" id="CHEBI:49883"/>
        <label>2</label>
        <note>4Fe-4S-S-AdoMet</note>
    </ligand>
</feature>
<reference key="1">
    <citation type="submission" date="2007-05" db="EMBL/GenBank/DDBJ databases">
        <title>Complete sequence of Thermotoga petrophila RKU-1.</title>
        <authorList>
            <consortium name="US DOE Joint Genome Institute"/>
            <person name="Copeland A."/>
            <person name="Lucas S."/>
            <person name="Lapidus A."/>
            <person name="Barry K."/>
            <person name="Glavina del Rio T."/>
            <person name="Dalin E."/>
            <person name="Tice H."/>
            <person name="Pitluck S."/>
            <person name="Sims D."/>
            <person name="Brettin T."/>
            <person name="Bruce D."/>
            <person name="Detter J.C."/>
            <person name="Han C."/>
            <person name="Tapia R."/>
            <person name="Schmutz J."/>
            <person name="Larimer F."/>
            <person name="Land M."/>
            <person name="Hauser L."/>
            <person name="Kyrpides N."/>
            <person name="Mikhailova N."/>
            <person name="Nelson K."/>
            <person name="Gogarten J.P."/>
            <person name="Noll K."/>
            <person name="Richardson P."/>
        </authorList>
    </citation>
    <scope>NUCLEOTIDE SEQUENCE [LARGE SCALE GENOMIC DNA]</scope>
    <source>
        <strain>ATCC BAA-488 / DSM 13995 / JCM 10881 / RKU-1</strain>
    </source>
</reference>
<dbReference type="EC" id="2.8.4.4" evidence="1"/>
<dbReference type="EMBL" id="CP000702">
    <property type="protein sequence ID" value="ABQ46953.1"/>
    <property type="molecule type" value="Genomic_DNA"/>
</dbReference>
<dbReference type="RefSeq" id="WP_011943497.1">
    <property type="nucleotide sequence ID" value="NC_009486.1"/>
</dbReference>
<dbReference type="SMR" id="A5IL80"/>
<dbReference type="STRING" id="390874.Tpet_0935"/>
<dbReference type="KEGG" id="tpt:Tpet_0935"/>
<dbReference type="eggNOG" id="COG0621">
    <property type="taxonomic scope" value="Bacteria"/>
</dbReference>
<dbReference type="HOGENOM" id="CLU_018697_0_1_0"/>
<dbReference type="Proteomes" id="UP000006558">
    <property type="component" value="Chromosome"/>
</dbReference>
<dbReference type="GO" id="GO:0005829">
    <property type="term" value="C:cytosol"/>
    <property type="evidence" value="ECO:0007669"/>
    <property type="project" value="TreeGrafter"/>
</dbReference>
<dbReference type="GO" id="GO:0051539">
    <property type="term" value="F:4 iron, 4 sulfur cluster binding"/>
    <property type="evidence" value="ECO:0007669"/>
    <property type="project" value="UniProtKB-UniRule"/>
</dbReference>
<dbReference type="GO" id="GO:0035599">
    <property type="term" value="F:aspartic acid methylthiotransferase activity"/>
    <property type="evidence" value="ECO:0007669"/>
    <property type="project" value="TreeGrafter"/>
</dbReference>
<dbReference type="GO" id="GO:0046872">
    <property type="term" value="F:metal ion binding"/>
    <property type="evidence" value="ECO:0007669"/>
    <property type="project" value="UniProtKB-KW"/>
</dbReference>
<dbReference type="GO" id="GO:0103039">
    <property type="term" value="F:protein methylthiotransferase activity"/>
    <property type="evidence" value="ECO:0007669"/>
    <property type="project" value="UniProtKB-EC"/>
</dbReference>
<dbReference type="GO" id="GO:0006400">
    <property type="term" value="P:tRNA modification"/>
    <property type="evidence" value="ECO:0007669"/>
    <property type="project" value="InterPro"/>
</dbReference>
<dbReference type="CDD" id="cd01335">
    <property type="entry name" value="Radical_SAM"/>
    <property type="match status" value="1"/>
</dbReference>
<dbReference type="FunFam" id="2.40.50.140:FF:000210">
    <property type="entry name" value="Ribosomal protein S12 methylthiotransferase RimO"/>
    <property type="match status" value="1"/>
</dbReference>
<dbReference type="FunFam" id="3.40.50.12160:FF:000021">
    <property type="entry name" value="Ribosomal protein S12 methylthiotransferase RimO"/>
    <property type="match status" value="1"/>
</dbReference>
<dbReference type="FunFam" id="3.80.30.20:FF:000001">
    <property type="entry name" value="tRNA-2-methylthio-N(6)-dimethylallyladenosine synthase 2"/>
    <property type="match status" value="1"/>
</dbReference>
<dbReference type="Gene3D" id="3.40.50.12160">
    <property type="entry name" value="Methylthiotransferase, N-terminal domain"/>
    <property type="match status" value="1"/>
</dbReference>
<dbReference type="Gene3D" id="2.40.50.140">
    <property type="entry name" value="Nucleic acid-binding proteins"/>
    <property type="match status" value="1"/>
</dbReference>
<dbReference type="Gene3D" id="3.80.30.20">
    <property type="entry name" value="tm_1862 like domain"/>
    <property type="match status" value="1"/>
</dbReference>
<dbReference type="HAMAP" id="MF_01865">
    <property type="entry name" value="MTTase_RimO"/>
    <property type="match status" value="1"/>
</dbReference>
<dbReference type="InterPro" id="IPR006638">
    <property type="entry name" value="Elp3/MiaA/NifB-like_rSAM"/>
</dbReference>
<dbReference type="InterPro" id="IPR005839">
    <property type="entry name" value="Methylthiotransferase"/>
</dbReference>
<dbReference type="InterPro" id="IPR020612">
    <property type="entry name" value="Methylthiotransferase_CS"/>
</dbReference>
<dbReference type="InterPro" id="IPR013848">
    <property type="entry name" value="Methylthiotransferase_N"/>
</dbReference>
<dbReference type="InterPro" id="IPR038135">
    <property type="entry name" value="Methylthiotransferase_N_sf"/>
</dbReference>
<dbReference type="InterPro" id="IPR012340">
    <property type="entry name" value="NA-bd_OB-fold"/>
</dbReference>
<dbReference type="InterPro" id="IPR005840">
    <property type="entry name" value="Ribosomal_uS12_MeSTrfase_RimO"/>
</dbReference>
<dbReference type="InterPro" id="IPR007197">
    <property type="entry name" value="rSAM"/>
</dbReference>
<dbReference type="InterPro" id="IPR023404">
    <property type="entry name" value="rSAM_horseshoe"/>
</dbReference>
<dbReference type="InterPro" id="IPR002792">
    <property type="entry name" value="TRAM_dom"/>
</dbReference>
<dbReference type="NCBIfam" id="TIGR01125">
    <property type="entry name" value="30S ribosomal protein S12 methylthiotransferase RimO"/>
    <property type="match status" value="1"/>
</dbReference>
<dbReference type="NCBIfam" id="TIGR00089">
    <property type="entry name" value="MiaB/RimO family radical SAM methylthiotransferase"/>
    <property type="match status" value="1"/>
</dbReference>
<dbReference type="PANTHER" id="PTHR43837">
    <property type="entry name" value="RIBOSOMAL PROTEIN S12 METHYLTHIOTRANSFERASE RIMO"/>
    <property type="match status" value="1"/>
</dbReference>
<dbReference type="PANTHER" id="PTHR43837:SF1">
    <property type="entry name" value="RIBOSOMAL PROTEIN US12 METHYLTHIOTRANSFERASE RIMO"/>
    <property type="match status" value="1"/>
</dbReference>
<dbReference type="Pfam" id="PF04055">
    <property type="entry name" value="Radical_SAM"/>
    <property type="match status" value="1"/>
</dbReference>
<dbReference type="Pfam" id="PF18693">
    <property type="entry name" value="TRAM_2"/>
    <property type="match status" value="1"/>
</dbReference>
<dbReference type="Pfam" id="PF00919">
    <property type="entry name" value="UPF0004"/>
    <property type="match status" value="1"/>
</dbReference>
<dbReference type="SFLD" id="SFLDG01082">
    <property type="entry name" value="B12-binding_domain_containing"/>
    <property type="match status" value="1"/>
</dbReference>
<dbReference type="SFLD" id="SFLDS00029">
    <property type="entry name" value="Radical_SAM"/>
    <property type="match status" value="1"/>
</dbReference>
<dbReference type="SFLD" id="SFLDF00274">
    <property type="entry name" value="ribosomal_protein_S12_methylth"/>
    <property type="match status" value="1"/>
</dbReference>
<dbReference type="SMART" id="SM00729">
    <property type="entry name" value="Elp3"/>
    <property type="match status" value="1"/>
</dbReference>
<dbReference type="SUPFAM" id="SSF102114">
    <property type="entry name" value="Radical SAM enzymes"/>
    <property type="match status" value="1"/>
</dbReference>
<dbReference type="PROSITE" id="PS51449">
    <property type="entry name" value="MTTASE_N"/>
    <property type="match status" value="1"/>
</dbReference>
<dbReference type="PROSITE" id="PS01278">
    <property type="entry name" value="MTTASE_RADICAL"/>
    <property type="match status" value="1"/>
</dbReference>
<dbReference type="PROSITE" id="PS51918">
    <property type="entry name" value="RADICAL_SAM"/>
    <property type="match status" value="1"/>
</dbReference>
<dbReference type="PROSITE" id="PS50926">
    <property type="entry name" value="TRAM"/>
    <property type="match status" value="1"/>
</dbReference>